<organism>
    <name type="scientific">Influenza A virus (strain A/Kitakyushu/159/1993 H3N2)</name>
    <dbReference type="NCBI Taxonomy" id="62478"/>
    <lineage>
        <taxon>Viruses</taxon>
        <taxon>Riboviria</taxon>
        <taxon>Orthornavirae</taxon>
        <taxon>Negarnaviricota</taxon>
        <taxon>Polyploviricotina</taxon>
        <taxon>Insthoviricetes</taxon>
        <taxon>Articulavirales</taxon>
        <taxon>Orthomyxoviridae</taxon>
        <taxon>Alphainfluenzavirus</taxon>
        <taxon>Alphainfluenzavirus influenzae</taxon>
        <taxon>Influenza A virus</taxon>
    </lineage>
</organism>
<evidence type="ECO:0000255" key="1">
    <source>
        <dbReference type="HAMAP-Rule" id="MF_04062"/>
    </source>
</evidence>
<accession>O91740</accession>
<feature type="chain" id="PRO_0000078826" description="Polymerase basic protein 2">
    <location>
        <begin position="1"/>
        <end position="759"/>
    </location>
</feature>
<feature type="short sequence motif" description="Nuclear localization signal" evidence="1">
    <location>
        <begin position="736"/>
        <end position="739"/>
    </location>
</feature>
<feature type="site" description="Mammalian adaptation" evidence="1">
    <location>
        <position position="627"/>
    </location>
</feature>
<keyword id="KW-1157">Cap snatching</keyword>
<keyword id="KW-1262">Eukaryotic host gene expression shutoff by virus</keyword>
<keyword id="KW-1191">Eukaryotic host transcription shutoff by virus</keyword>
<keyword id="KW-1190">Host gene expression shutoff by virus</keyword>
<keyword id="KW-1045">Host mitochondrion</keyword>
<keyword id="KW-1048">Host nucleus</keyword>
<keyword id="KW-0945">Host-virus interaction</keyword>
<keyword id="KW-1090">Inhibition of host innate immune response by virus</keyword>
<keyword id="KW-1097">Inhibition of host MAVS by virus</keyword>
<keyword id="KW-1113">Inhibition of host RLR pathway by virus</keyword>
<keyword id="KW-1104">Inhibition of host RNA polymerase II by virus</keyword>
<keyword id="KW-0506">mRNA capping</keyword>
<keyword id="KW-0507">mRNA processing</keyword>
<keyword id="KW-0899">Viral immunoevasion</keyword>
<keyword id="KW-1195">Viral transcription</keyword>
<keyword id="KW-0946">Virion</keyword>
<reference key="1">
    <citation type="journal article" date="1998" name="J. Virol.">
        <title>Phylogenetic analysis of the entire genome of influenza A (H3N2) viruses from Japan: evidence for genetic reassortment of the six internal genes.</title>
        <authorList>
            <person name="Lindstrom S.E."/>
            <person name="Hiromoto Y."/>
            <person name="Nerome R."/>
            <person name="Omoe K."/>
            <person name="Sugita S."/>
            <person name="Yamazaki Y."/>
            <person name="Takahashi T."/>
            <person name="Nerome K."/>
        </authorList>
    </citation>
    <scope>NUCLEOTIDE SEQUENCE [GENOMIC RNA]</scope>
</reference>
<dbReference type="EMBL" id="AF037412">
    <property type="protein sequence ID" value="AAC63443.1"/>
    <property type="molecule type" value="Genomic_RNA"/>
</dbReference>
<dbReference type="SMR" id="O91740"/>
<dbReference type="GO" id="GO:0033650">
    <property type="term" value="C:host cell mitochondrion"/>
    <property type="evidence" value="ECO:0007669"/>
    <property type="project" value="UniProtKB-SubCell"/>
</dbReference>
<dbReference type="GO" id="GO:0042025">
    <property type="term" value="C:host cell nucleus"/>
    <property type="evidence" value="ECO:0007669"/>
    <property type="project" value="UniProtKB-SubCell"/>
</dbReference>
<dbReference type="GO" id="GO:0044423">
    <property type="term" value="C:virion component"/>
    <property type="evidence" value="ECO:0007669"/>
    <property type="project" value="UniProtKB-UniRule"/>
</dbReference>
<dbReference type="GO" id="GO:0003723">
    <property type="term" value="F:RNA binding"/>
    <property type="evidence" value="ECO:0007669"/>
    <property type="project" value="UniProtKB-UniRule"/>
</dbReference>
<dbReference type="GO" id="GO:0003968">
    <property type="term" value="F:RNA-directed RNA polymerase activity"/>
    <property type="evidence" value="ECO:0007669"/>
    <property type="project" value="UniProtKB-UniRule"/>
</dbReference>
<dbReference type="GO" id="GO:0006370">
    <property type="term" value="P:7-methylguanosine mRNA capping"/>
    <property type="evidence" value="ECO:0007669"/>
    <property type="project" value="UniProtKB-UniRule"/>
</dbReference>
<dbReference type="GO" id="GO:0075526">
    <property type="term" value="P:cap snatching"/>
    <property type="evidence" value="ECO:0007669"/>
    <property type="project" value="UniProtKB-UniRule"/>
</dbReference>
<dbReference type="GO" id="GO:0006351">
    <property type="term" value="P:DNA-templated transcription"/>
    <property type="evidence" value="ECO:0007669"/>
    <property type="project" value="UniProtKB-UniRule"/>
</dbReference>
<dbReference type="GO" id="GO:0039545">
    <property type="term" value="P:symbiont-mediated suppression of host cytoplasmic pattern recognition receptor signaling pathway via inhibition of MAVS activity"/>
    <property type="evidence" value="ECO:0007669"/>
    <property type="project" value="UniProtKB-UniRule"/>
</dbReference>
<dbReference type="GO" id="GO:0039657">
    <property type="term" value="P:symbiont-mediated suppression of host gene expression"/>
    <property type="evidence" value="ECO:0007669"/>
    <property type="project" value="UniProtKB-KW"/>
</dbReference>
<dbReference type="GO" id="GO:0039523">
    <property type="term" value="P:symbiont-mediated suppression of host mRNA transcription via inhibition of RNA polymerase II activity"/>
    <property type="evidence" value="ECO:0007669"/>
    <property type="project" value="UniProtKB-UniRule"/>
</dbReference>
<dbReference type="GO" id="GO:0039694">
    <property type="term" value="P:viral RNA genome replication"/>
    <property type="evidence" value="ECO:0007669"/>
    <property type="project" value="InterPro"/>
</dbReference>
<dbReference type="FunFam" id="3.30.30.90:FF:000001">
    <property type="entry name" value="Polymerase basic protein 2"/>
    <property type="match status" value="1"/>
</dbReference>
<dbReference type="Gene3D" id="3.30.30.90">
    <property type="entry name" value="Polymerase Basic Protein 2, C-terminal domain"/>
    <property type="match status" value="1"/>
</dbReference>
<dbReference type="HAMAP" id="MF_04062">
    <property type="entry name" value="INV_PB2"/>
    <property type="match status" value="1"/>
</dbReference>
<dbReference type="InterPro" id="IPR049110">
    <property type="entry name" value="Flu_PB2_2nd"/>
</dbReference>
<dbReference type="InterPro" id="IPR049114">
    <property type="entry name" value="Flu_PB2_6th"/>
</dbReference>
<dbReference type="InterPro" id="IPR049115">
    <property type="entry name" value="Flu_PB2_C"/>
</dbReference>
<dbReference type="InterPro" id="IPR048298">
    <property type="entry name" value="Flu_PB2_CAP-bd"/>
</dbReference>
<dbReference type="InterPro" id="IPR049111">
    <property type="entry name" value="Flu_PB2_middle"/>
</dbReference>
<dbReference type="InterPro" id="IPR049106">
    <property type="entry name" value="Flu_PB2_N"/>
</dbReference>
<dbReference type="InterPro" id="IPR001591">
    <property type="entry name" value="INV_PB2"/>
</dbReference>
<dbReference type="InterPro" id="IPR049113">
    <property type="entry name" value="PB2_helical"/>
</dbReference>
<dbReference type="InterPro" id="IPR037258">
    <property type="entry name" value="PDB2_C"/>
</dbReference>
<dbReference type="Pfam" id="PF20947">
    <property type="entry name" value="Flu_PB2_1st"/>
    <property type="match status" value="1"/>
</dbReference>
<dbReference type="Pfam" id="PF20948">
    <property type="entry name" value="Flu_PB2_2nd"/>
    <property type="match status" value="1"/>
</dbReference>
<dbReference type="Pfam" id="PF20949">
    <property type="entry name" value="Flu_PB2_3rd"/>
    <property type="match status" value="1"/>
</dbReference>
<dbReference type="Pfam" id="PF20950">
    <property type="entry name" value="Flu_PB2_4th"/>
    <property type="match status" value="1"/>
</dbReference>
<dbReference type="Pfam" id="PF00604">
    <property type="entry name" value="Flu_PB2_5th"/>
    <property type="match status" value="1"/>
</dbReference>
<dbReference type="Pfam" id="PF20951">
    <property type="entry name" value="Flu_PB2_6th"/>
    <property type="match status" value="1"/>
</dbReference>
<dbReference type="Pfam" id="PF20952">
    <property type="entry name" value="Flu_PB2_7th"/>
    <property type="match status" value="1"/>
</dbReference>
<dbReference type="SUPFAM" id="SSF160453">
    <property type="entry name" value="PB2 C-terminal domain-like"/>
    <property type="match status" value="1"/>
</dbReference>
<comment type="function">
    <text evidence="1">Plays an essential role in transcription initiation and cap-stealing mechanism, in which cellular capped pre-mRNAs are used to generate primers for viral transcription. Recognizes and binds the 7-methylguanosine-containing cap of the target pre-RNA which is subsequently cleaved after 10-13 nucleotides by the viral protein PA. Plays a role in the initiation of the viral genome replication and modulates the activity of the ribonucleoprotein (RNP) complex. In addition, participates in the inhibition of type I interferon induction through interaction with and inhibition of the host mitochondrial antiviral signaling protein MAVS.</text>
</comment>
<comment type="subunit">
    <text evidence="1">Influenza RNA polymerase is composed of three subunits: PB1, PB2 and PA. Interacts (via N-terminus) with PB1 (via C-terminus). Interacts with nucleoprotein NP (via N-terminus). Interacts (via N-terminus) with host MAVS (via N-terminus); this interaction inhibits host innate immune response.</text>
</comment>
<comment type="subcellular location">
    <subcellularLocation>
        <location evidence="1">Virion</location>
    </subcellularLocation>
    <subcellularLocation>
        <location evidence="1">Host nucleus</location>
    </subcellularLocation>
    <subcellularLocation>
        <location evidence="1">Host mitochondrion</location>
    </subcellularLocation>
</comment>
<comment type="similarity">
    <text evidence="1">Belongs to the influenza viruses PB2 family.</text>
</comment>
<organismHost>
    <name type="scientific">Aves</name>
    <dbReference type="NCBI Taxonomy" id="8782"/>
</organismHost>
<organismHost>
    <name type="scientific">Homo sapiens</name>
    <name type="common">Human</name>
    <dbReference type="NCBI Taxonomy" id="9606"/>
</organismHost>
<organismHost>
    <name type="scientific">Phocidae</name>
    <name type="common">true seals</name>
    <dbReference type="NCBI Taxonomy" id="9709"/>
</organismHost>
<organismHost>
    <name type="scientific">Sus scrofa</name>
    <name type="common">Pig</name>
    <dbReference type="NCBI Taxonomy" id="9823"/>
</organismHost>
<gene>
    <name evidence="1" type="primary">PB2</name>
</gene>
<name>PB2_I93A0</name>
<sequence length="759" mass="86052">MERIKELRNLMSQSRTREILTKTTVDHMAIIKKYTSGRQEKNPSLRMKWMMAMKYPITADKRITEMVPERNEQGQTLWSKMSDAGSDRVMVSPLAVTWWNRNGPVTNTVHYPKVYKTYFDKVERLKHGTFGPVHFRNQVKIRRRVDINPGHADLSAKEAQDVIMEVVFPNEVGARILTSESQLTITKEKKEELRDCKISPLMVAYMLERELVRKTRFLPVAGGTSSIYIEVLHLTQGTCWEQMYTPGGEVRNDDVDQSLIIAARNIVRRAAVSADPLASLLEMCHSTQIGGTRMVDILRQNPTEEQAVDICKAAMGLRISSSFSFGGFTFKRTSGSSVKREEEVLTGNLQTLKIRVHEGYEEFTMVGKRATAILRKATRRLVQLIVSGRDEQSIAEAIIVAMVFSQEDCMIKAVRGDLNFVNRANQRLNPMHQLLRHFQKDAKVLFQNWGIEHIDSVMGMVGVLPDMTPSTEMSMRGIRVSKMGVDEYSSTERVVVSIDRFLRVRDQRGNVLLSPEEVSETQGTERLTITYSSSMMWEINGPESVLVNTYQWVIRNWETVKIQWSQNPAILYNKMEFEPFQSLVPKAIRGQYSGFVRTLFQQMRDVLGTFDTTQIIKLLPFAAAPPKQSRMQFSSLTVNVRGSGMRILVRGNSPVFNYNKTTKRLTILGKDAGTLIEDPDESTSGVESAVLRGFLILGKEDRRYGPALSINELSNLAKGEKANVLIGQGDVVLVMKRKRDSSILTDSQTATKRIRMAIN</sequence>
<protein>
    <recommendedName>
        <fullName evidence="1">Polymerase basic protein 2</fullName>
    </recommendedName>
    <alternativeName>
        <fullName evidence="1">RNA-directed RNA polymerase subunit P3</fullName>
    </alternativeName>
</protein>
<proteinExistence type="inferred from homology"/>